<name>RL2_NEIG2</name>
<dbReference type="EMBL" id="CP001050">
    <property type="protein sequence ID" value="ACF31040.1"/>
    <property type="molecule type" value="Genomic_DNA"/>
</dbReference>
<dbReference type="RefSeq" id="WP_003690083.1">
    <property type="nucleotide sequence ID" value="NC_011035.1"/>
</dbReference>
<dbReference type="SMR" id="B4RQY1"/>
<dbReference type="GeneID" id="66754298"/>
<dbReference type="KEGG" id="ngk:NGK_2439"/>
<dbReference type="HOGENOM" id="CLU_036235_2_1_4"/>
<dbReference type="Proteomes" id="UP000002564">
    <property type="component" value="Chromosome"/>
</dbReference>
<dbReference type="GO" id="GO:0015934">
    <property type="term" value="C:large ribosomal subunit"/>
    <property type="evidence" value="ECO:0007669"/>
    <property type="project" value="InterPro"/>
</dbReference>
<dbReference type="GO" id="GO:0019843">
    <property type="term" value="F:rRNA binding"/>
    <property type="evidence" value="ECO:0007669"/>
    <property type="project" value="UniProtKB-UniRule"/>
</dbReference>
<dbReference type="GO" id="GO:0003735">
    <property type="term" value="F:structural constituent of ribosome"/>
    <property type="evidence" value="ECO:0007669"/>
    <property type="project" value="InterPro"/>
</dbReference>
<dbReference type="GO" id="GO:0016740">
    <property type="term" value="F:transferase activity"/>
    <property type="evidence" value="ECO:0007669"/>
    <property type="project" value="InterPro"/>
</dbReference>
<dbReference type="GO" id="GO:0002181">
    <property type="term" value="P:cytoplasmic translation"/>
    <property type="evidence" value="ECO:0007669"/>
    <property type="project" value="TreeGrafter"/>
</dbReference>
<dbReference type="FunFam" id="2.30.30.30:FF:000001">
    <property type="entry name" value="50S ribosomal protein L2"/>
    <property type="match status" value="1"/>
</dbReference>
<dbReference type="FunFam" id="2.40.50.140:FF:000003">
    <property type="entry name" value="50S ribosomal protein L2"/>
    <property type="match status" value="1"/>
</dbReference>
<dbReference type="FunFam" id="4.10.950.10:FF:000001">
    <property type="entry name" value="50S ribosomal protein L2"/>
    <property type="match status" value="1"/>
</dbReference>
<dbReference type="Gene3D" id="2.30.30.30">
    <property type="match status" value="1"/>
</dbReference>
<dbReference type="Gene3D" id="2.40.50.140">
    <property type="entry name" value="Nucleic acid-binding proteins"/>
    <property type="match status" value="1"/>
</dbReference>
<dbReference type="Gene3D" id="4.10.950.10">
    <property type="entry name" value="Ribosomal protein L2, domain 3"/>
    <property type="match status" value="1"/>
</dbReference>
<dbReference type="HAMAP" id="MF_01320_B">
    <property type="entry name" value="Ribosomal_uL2_B"/>
    <property type="match status" value="1"/>
</dbReference>
<dbReference type="InterPro" id="IPR012340">
    <property type="entry name" value="NA-bd_OB-fold"/>
</dbReference>
<dbReference type="InterPro" id="IPR014722">
    <property type="entry name" value="Rib_uL2_dom2"/>
</dbReference>
<dbReference type="InterPro" id="IPR002171">
    <property type="entry name" value="Ribosomal_uL2"/>
</dbReference>
<dbReference type="InterPro" id="IPR005880">
    <property type="entry name" value="Ribosomal_uL2_bac/org-type"/>
</dbReference>
<dbReference type="InterPro" id="IPR022669">
    <property type="entry name" value="Ribosomal_uL2_C"/>
</dbReference>
<dbReference type="InterPro" id="IPR022671">
    <property type="entry name" value="Ribosomal_uL2_CS"/>
</dbReference>
<dbReference type="InterPro" id="IPR014726">
    <property type="entry name" value="Ribosomal_uL2_dom3"/>
</dbReference>
<dbReference type="InterPro" id="IPR022666">
    <property type="entry name" value="Ribosomal_uL2_RNA-bd_dom"/>
</dbReference>
<dbReference type="InterPro" id="IPR008991">
    <property type="entry name" value="Translation_prot_SH3-like_sf"/>
</dbReference>
<dbReference type="NCBIfam" id="TIGR01171">
    <property type="entry name" value="rplB_bact"/>
    <property type="match status" value="1"/>
</dbReference>
<dbReference type="PANTHER" id="PTHR13691:SF5">
    <property type="entry name" value="LARGE RIBOSOMAL SUBUNIT PROTEIN UL2M"/>
    <property type="match status" value="1"/>
</dbReference>
<dbReference type="PANTHER" id="PTHR13691">
    <property type="entry name" value="RIBOSOMAL PROTEIN L2"/>
    <property type="match status" value="1"/>
</dbReference>
<dbReference type="Pfam" id="PF00181">
    <property type="entry name" value="Ribosomal_L2"/>
    <property type="match status" value="1"/>
</dbReference>
<dbReference type="Pfam" id="PF03947">
    <property type="entry name" value="Ribosomal_L2_C"/>
    <property type="match status" value="1"/>
</dbReference>
<dbReference type="PIRSF" id="PIRSF002158">
    <property type="entry name" value="Ribosomal_L2"/>
    <property type="match status" value="1"/>
</dbReference>
<dbReference type="SMART" id="SM01383">
    <property type="entry name" value="Ribosomal_L2"/>
    <property type="match status" value="1"/>
</dbReference>
<dbReference type="SMART" id="SM01382">
    <property type="entry name" value="Ribosomal_L2_C"/>
    <property type="match status" value="1"/>
</dbReference>
<dbReference type="SUPFAM" id="SSF50249">
    <property type="entry name" value="Nucleic acid-binding proteins"/>
    <property type="match status" value="1"/>
</dbReference>
<dbReference type="SUPFAM" id="SSF50104">
    <property type="entry name" value="Translation proteins SH3-like domain"/>
    <property type="match status" value="1"/>
</dbReference>
<dbReference type="PROSITE" id="PS00467">
    <property type="entry name" value="RIBOSOMAL_L2"/>
    <property type="match status" value="1"/>
</dbReference>
<reference key="1">
    <citation type="journal article" date="2008" name="J. Bacteriol.">
        <title>Complete genome sequence of Neisseria gonorrhoeae NCCP11945.</title>
        <authorList>
            <person name="Chung G.T."/>
            <person name="Yoo J.S."/>
            <person name="Oh H.B."/>
            <person name="Lee Y.S."/>
            <person name="Cha S.H."/>
            <person name="Kim S.J."/>
            <person name="Yoo C.K."/>
        </authorList>
    </citation>
    <scope>NUCLEOTIDE SEQUENCE [LARGE SCALE GENOMIC DNA]</scope>
    <source>
        <strain>NCCP11945</strain>
    </source>
</reference>
<keyword id="KW-0687">Ribonucleoprotein</keyword>
<keyword id="KW-0689">Ribosomal protein</keyword>
<keyword id="KW-0694">RNA-binding</keyword>
<keyword id="KW-0699">rRNA-binding</keyword>
<feature type="chain" id="PRO_1000141586" description="Large ribosomal subunit protein uL2">
    <location>
        <begin position="1"/>
        <end position="277"/>
    </location>
</feature>
<feature type="region of interest" description="Disordered" evidence="2">
    <location>
        <begin position="37"/>
        <end position="60"/>
    </location>
</feature>
<feature type="region of interest" description="Disordered" evidence="2">
    <location>
        <begin position="223"/>
        <end position="264"/>
    </location>
</feature>
<feature type="compositionally biased region" description="Polar residues" evidence="2">
    <location>
        <begin position="39"/>
        <end position="49"/>
    </location>
</feature>
<feature type="compositionally biased region" description="Basic residues" evidence="2">
    <location>
        <begin position="50"/>
        <end position="60"/>
    </location>
</feature>
<feature type="compositionally biased region" description="Basic and acidic residues" evidence="2">
    <location>
        <begin position="229"/>
        <end position="244"/>
    </location>
</feature>
<evidence type="ECO:0000255" key="1">
    <source>
        <dbReference type="HAMAP-Rule" id="MF_01320"/>
    </source>
</evidence>
<evidence type="ECO:0000256" key="2">
    <source>
        <dbReference type="SAM" id="MobiDB-lite"/>
    </source>
</evidence>
<evidence type="ECO:0000305" key="3"/>
<protein>
    <recommendedName>
        <fullName evidence="1">Large ribosomal subunit protein uL2</fullName>
    </recommendedName>
    <alternativeName>
        <fullName evidence="3">50S ribosomal protein L2</fullName>
    </alternativeName>
</protein>
<organism>
    <name type="scientific">Neisseria gonorrhoeae (strain NCCP11945)</name>
    <dbReference type="NCBI Taxonomy" id="521006"/>
    <lineage>
        <taxon>Bacteria</taxon>
        <taxon>Pseudomonadati</taxon>
        <taxon>Pseudomonadota</taxon>
        <taxon>Betaproteobacteria</taxon>
        <taxon>Neisseriales</taxon>
        <taxon>Neisseriaceae</taxon>
        <taxon>Neisseria</taxon>
    </lineage>
</organism>
<accession>B4RQY1</accession>
<proteinExistence type="inferred from homology"/>
<comment type="function">
    <text evidence="1">One of the primary rRNA binding proteins. Required for association of the 30S and 50S subunits to form the 70S ribosome, for tRNA binding and peptide bond formation. It has been suggested to have peptidyltransferase activity; this is somewhat controversial. Makes several contacts with the 16S rRNA in the 70S ribosome.</text>
</comment>
<comment type="subunit">
    <text evidence="1">Part of the 50S ribosomal subunit. Forms a bridge to the 30S subunit in the 70S ribosome.</text>
</comment>
<comment type="similarity">
    <text evidence="1">Belongs to the universal ribosomal protein uL2 family.</text>
</comment>
<sequence>MAIVKMKPTSAGRRGMVRVVTEGLHKGAPYAPLLEKKNSTAGRNNNGHITTRHKGGGHKHHYRVVDFKRNKDGISAKVERIEYDPNRTAFIALLCYADGERRYIIAPRGIQAGVVLVSGAEAAIKVGNTLPIRNIPVGTTIHCIEMKPGKGAQIARSAGASAVLLAKEGAYAQVRLRSGEVRKINVDCRATIGEVGNEEQSLKKIGKAGANRWRGIRPTVRGVVMNPVDHPHGGGEGRTGEAREPVSPWGTPAKGYRTRNNKRTDNMIVRRRYSNKG</sequence>
<gene>
    <name evidence="1" type="primary">rplB</name>
    <name type="ordered locus">NGK_2439</name>
</gene>